<keyword id="KW-0067">ATP-binding</keyword>
<keyword id="KW-0963">Cytoplasm</keyword>
<keyword id="KW-0227">DNA damage</keyword>
<keyword id="KW-0233">DNA recombination</keyword>
<keyword id="KW-0234">DNA repair</keyword>
<keyword id="KW-0238">DNA-binding</keyword>
<keyword id="KW-0378">Hydrolase</keyword>
<keyword id="KW-0547">Nucleotide-binding</keyword>
<keyword id="KW-1185">Reference proteome</keyword>
<gene>
    <name evidence="1" type="primary">ruvB</name>
    <name type="ordered locus">BAV2780</name>
</gene>
<proteinExistence type="inferred from homology"/>
<protein>
    <recommendedName>
        <fullName evidence="1">Holliday junction branch migration complex subunit RuvB</fullName>
        <ecNumber evidence="1">3.6.4.-</ecNumber>
    </recommendedName>
</protein>
<accession>Q2KVY2</accession>
<comment type="function">
    <text evidence="1">The RuvA-RuvB-RuvC complex processes Holliday junction (HJ) DNA during genetic recombination and DNA repair, while the RuvA-RuvB complex plays an important role in the rescue of blocked DNA replication forks via replication fork reversal (RFR). RuvA specifically binds to HJ cruciform DNA, conferring on it an open structure. The RuvB hexamer acts as an ATP-dependent pump, pulling dsDNA into and through the RuvAB complex. RuvB forms 2 homohexamers on either side of HJ DNA bound by 1 or 2 RuvA tetramers; 4 subunits per hexamer contact DNA at a time. Coordinated motions by a converter formed by DNA-disengaged RuvB subunits stimulates ATP hydrolysis and nucleotide exchange. Immobilization of the converter enables RuvB to convert the ATP-contained energy into a lever motion, pulling 2 nucleotides of DNA out of the RuvA tetramer per ATP hydrolyzed, thus driving DNA branch migration. The RuvB motors rotate together with the DNA substrate, which together with the progressing nucleotide cycle form the mechanistic basis for DNA recombination by continuous HJ branch migration. Branch migration allows RuvC to scan DNA until it finds its consensus sequence, where it cleaves and resolves cruciform DNA.</text>
</comment>
<comment type="catalytic activity">
    <reaction evidence="1">
        <text>ATP + H2O = ADP + phosphate + H(+)</text>
        <dbReference type="Rhea" id="RHEA:13065"/>
        <dbReference type="ChEBI" id="CHEBI:15377"/>
        <dbReference type="ChEBI" id="CHEBI:15378"/>
        <dbReference type="ChEBI" id="CHEBI:30616"/>
        <dbReference type="ChEBI" id="CHEBI:43474"/>
        <dbReference type="ChEBI" id="CHEBI:456216"/>
    </reaction>
</comment>
<comment type="subunit">
    <text evidence="1">Homohexamer. Forms an RuvA(8)-RuvB(12)-Holliday junction (HJ) complex. HJ DNA is sandwiched between 2 RuvA tetramers; dsDNA enters through RuvA and exits via RuvB. An RuvB hexamer assembles on each DNA strand where it exits the tetramer. Each RuvB hexamer is contacted by two RuvA subunits (via domain III) on 2 adjacent RuvB subunits; this complex drives branch migration. In the full resolvosome a probable DNA-RuvA(4)-RuvB(12)-RuvC(2) complex forms which resolves the HJ.</text>
</comment>
<comment type="subcellular location">
    <subcellularLocation>
        <location evidence="1">Cytoplasm</location>
    </subcellularLocation>
</comment>
<comment type="domain">
    <text evidence="1">Has 3 domains, the large (RuvB-L) and small ATPase (RuvB-S) domains and the C-terminal head (RuvB-H) domain. The head domain binds DNA, while the ATPase domains jointly bind ATP, ADP or are empty depending on the state of the subunit in the translocation cycle. During a single DNA translocation step the structure of each domain remains the same, but their relative positions change.</text>
</comment>
<comment type="similarity">
    <text evidence="1">Belongs to the RuvB family.</text>
</comment>
<reference key="1">
    <citation type="journal article" date="2006" name="J. Bacteriol.">
        <title>Comparison of the genome sequence of the poultry pathogen Bordetella avium with those of B. bronchiseptica, B. pertussis, and B. parapertussis reveals extensive diversity in surface structures associated with host interaction.</title>
        <authorList>
            <person name="Sebaihia M."/>
            <person name="Preston A."/>
            <person name="Maskell D.J."/>
            <person name="Kuzmiak H."/>
            <person name="Connell T.D."/>
            <person name="King N.D."/>
            <person name="Orndorff P.E."/>
            <person name="Miyamoto D.M."/>
            <person name="Thomson N.R."/>
            <person name="Harris D."/>
            <person name="Goble A."/>
            <person name="Lord A."/>
            <person name="Murphy L."/>
            <person name="Quail M.A."/>
            <person name="Rutter S."/>
            <person name="Squares R."/>
            <person name="Squares S."/>
            <person name="Woodward J."/>
            <person name="Parkhill J."/>
            <person name="Temple L.M."/>
        </authorList>
    </citation>
    <scope>NUCLEOTIDE SEQUENCE [LARGE SCALE GENOMIC DNA]</scope>
    <source>
        <strain>197N</strain>
    </source>
</reference>
<name>RUVB_BORA1</name>
<feature type="chain" id="PRO_0000235350" description="Holliday junction branch migration complex subunit RuvB">
    <location>
        <begin position="1"/>
        <end position="357"/>
    </location>
</feature>
<feature type="region of interest" description="Disordered" evidence="2">
    <location>
        <begin position="1"/>
        <end position="30"/>
    </location>
</feature>
<feature type="region of interest" description="Large ATPase domain (RuvB-L)" evidence="1">
    <location>
        <begin position="5"/>
        <end position="195"/>
    </location>
</feature>
<feature type="region of interest" description="Small ATPAse domain (RuvB-S)" evidence="1">
    <location>
        <begin position="196"/>
        <end position="266"/>
    </location>
</feature>
<feature type="region of interest" description="Head domain (RuvB-H)" evidence="1">
    <location>
        <begin position="269"/>
        <end position="357"/>
    </location>
</feature>
<feature type="compositionally biased region" description="Polar residues" evidence="2">
    <location>
        <begin position="1"/>
        <end position="10"/>
    </location>
</feature>
<feature type="binding site" evidence="1">
    <location>
        <position position="34"/>
    </location>
    <ligand>
        <name>ATP</name>
        <dbReference type="ChEBI" id="CHEBI:30616"/>
    </ligand>
</feature>
<feature type="binding site" evidence="1">
    <location>
        <position position="35"/>
    </location>
    <ligand>
        <name>ATP</name>
        <dbReference type="ChEBI" id="CHEBI:30616"/>
    </ligand>
</feature>
<feature type="binding site" evidence="1">
    <location>
        <position position="76"/>
    </location>
    <ligand>
        <name>ATP</name>
        <dbReference type="ChEBI" id="CHEBI:30616"/>
    </ligand>
</feature>
<feature type="binding site" evidence="1">
    <location>
        <position position="79"/>
    </location>
    <ligand>
        <name>ATP</name>
        <dbReference type="ChEBI" id="CHEBI:30616"/>
    </ligand>
</feature>
<feature type="binding site" evidence="1">
    <location>
        <position position="80"/>
    </location>
    <ligand>
        <name>ATP</name>
        <dbReference type="ChEBI" id="CHEBI:30616"/>
    </ligand>
</feature>
<feature type="binding site" evidence="1">
    <location>
        <position position="80"/>
    </location>
    <ligand>
        <name>Mg(2+)</name>
        <dbReference type="ChEBI" id="CHEBI:18420"/>
    </ligand>
</feature>
<feature type="binding site" evidence="1">
    <location>
        <position position="81"/>
    </location>
    <ligand>
        <name>ATP</name>
        <dbReference type="ChEBI" id="CHEBI:30616"/>
    </ligand>
</feature>
<feature type="binding site" evidence="1">
    <location>
        <begin position="142"/>
        <end position="144"/>
    </location>
    <ligand>
        <name>ATP</name>
        <dbReference type="ChEBI" id="CHEBI:30616"/>
    </ligand>
</feature>
<feature type="binding site" evidence="1">
    <location>
        <position position="185"/>
    </location>
    <ligand>
        <name>ATP</name>
        <dbReference type="ChEBI" id="CHEBI:30616"/>
    </ligand>
</feature>
<feature type="binding site" evidence="1">
    <location>
        <position position="195"/>
    </location>
    <ligand>
        <name>ATP</name>
        <dbReference type="ChEBI" id="CHEBI:30616"/>
    </ligand>
</feature>
<feature type="binding site" evidence="1">
    <location>
        <position position="232"/>
    </location>
    <ligand>
        <name>ATP</name>
        <dbReference type="ChEBI" id="CHEBI:30616"/>
    </ligand>
</feature>
<feature type="binding site" evidence="1">
    <location>
        <position position="305"/>
    </location>
    <ligand>
        <name>DNA</name>
        <dbReference type="ChEBI" id="CHEBI:16991"/>
    </ligand>
</feature>
<feature type="binding site" evidence="1">
    <location>
        <position position="324"/>
    </location>
    <ligand>
        <name>DNA</name>
        <dbReference type="ChEBI" id="CHEBI:16991"/>
    </ligand>
</feature>
<feature type="binding site" evidence="1">
    <location>
        <position position="329"/>
    </location>
    <ligand>
        <name>DNA</name>
        <dbReference type="ChEBI" id="CHEBI:16991"/>
    </ligand>
</feature>
<evidence type="ECO:0000255" key="1">
    <source>
        <dbReference type="HAMAP-Rule" id="MF_00016"/>
    </source>
</evidence>
<evidence type="ECO:0000256" key="2">
    <source>
        <dbReference type="SAM" id="MobiDB-lite"/>
    </source>
</evidence>
<organism>
    <name type="scientific">Bordetella avium (strain 197N)</name>
    <dbReference type="NCBI Taxonomy" id="360910"/>
    <lineage>
        <taxon>Bacteria</taxon>
        <taxon>Pseudomonadati</taxon>
        <taxon>Pseudomonadota</taxon>
        <taxon>Betaproteobacteria</taxon>
        <taxon>Burkholderiales</taxon>
        <taxon>Alcaligenaceae</taxon>
        <taxon>Bordetella</taxon>
    </lineage>
</organism>
<sequence>MAIQSDSLSSRPDAPRLVAPAPASPNEESIERALRPKALQEYVGQQRAREQLEIFIAAARKRSEALDHVLLFGPPGLGKTTLAHIIAHEMGVQMRQTSGPVLERPGDLAALLTNLERNDVLFIDEIHRLSPVVEEILYPALEDFQIDILIGEGPAARSVKLDLQPFTLVGATTRAGMLTNPLRDRFGIVSRLEFYNTDDLAHIVTRSAGLLNADITPEGAREVARRARGTPRIANRLLRRVRDYAEVKAGGRIDTEAANQALAMLEVDPQGLDLMDRKLLEAIVHKFDGGPVGVDSLAAAIGEERDTIEDVIEPYLIQHGYLQRTPRGRMATQTTWRHLGLQPPSGSQPSSGDLFGA</sequence>
<dbReference type="EC" id="3.6.4.-" evidence="1"/>
<dbReference type="EMBL" id="AM167904">
    <property type="protein sequence ID" value="CAJ50391.1"/>
    <property type="molecule type" value="Genomic_DNA"/>
</dbReference>
<dbReference type="RefSeq" id="WP_012418422.1">
    <property type="nucleotide sequence ID" value="NC_010645.1"/>
</dbReference>
<dbReference type="SMR" id="Q2KVY2"/>
<dbReference type="STRING" id="360910.BAV2780"/>
<dbReference type="GeneID" id="92933972"/>
<dbReference type="KEGG" id="bav:BAV2780"/>
<dbReference type="eggNOG" id="COG2255">
    <property type="taxonomic scope" value="Bacteria"/>
</dbReference>
<dbReference type="HOGENOM" id="CLU_055599_1_0_4"/>
<dbReference type="OrthoDB" id="9804478at2"/>
<dbReference type="Proteomes" id="UP000001977">
    <property type="component" value="Chromosome"/>
</dbReference>
<dbReference type="GO" id="GO:0005737">
    <property type="term" value="C:cytoplasm"/>
    <property type="evidence" value="ECO:0007669"/>
    <property type="project" value="UniProtKB-SubCell"/>
</dbReference>
<dbReference type="GO" id="GO:0048476">
    <property type="term" value="C:Holliday junction resolvase complex"/>
    <property type="evidence" value="ECO:0007669"/>
    <property type="project" value="UniProtKB-UniRule"/>
</dbReference>
<dbReference type="GO" id="GO:0005524">
    <property type="term" value="F:ATP binding"/>
    <property type="evidence" value="ECO:0007669"/>
    <property type="project" value="UniProtKB-UniRule"/>
</dbReference>
<dbReference type="GO" id="GO:0016887">
    <property type="term" value="F:ATP hydrolysis activity"/>
    <property type="evidence" value="ECO:0007669"/>
    <property type="project" value="InterPro"/>
</dbReference>
<dbReference type="GO" id="GO:0000400">
    <property type="term" value="F:four-way junction DNA binding"/>
    <property type="evidence" value="ECO:0007669"/>
    <property type="project" value="UniProtKB-UniRule"/>
</dbReference>
<dbReference type="GO" id="GO:0009378">
    <property type="term" value="F:four-way junction helicase activity"/>
    <property type="evidence" value="ECO:0007669"/>
    <property type="project" value="InterPro"/>
</dbReference>
<dbReference type="GO" id="GO:0006310">
    <property type="term" value="P:DNA recombination"/>
    <property type="evidence" value="ECO:0007669"/>
    <property type="project" value="UniProtKB-UniRule"/>
</dbReference>
<dbReference type="GO" id="GO:0006281">
    <property type="term" value="P:DNA repair"/>
    <property type="evidence" value="ECO:0007669"/>
    <property type="project" value="UniProtKB-UniRule"/>
</dbReference>
<dbReference type="CDD" id="cd00009">
    <property type="entry name" value="AAA"/>
    <property type="match status" value="1"/>
</dbReference>
<dbReference type="FunFam" id="1.10.10.10:FF:000086">
    <property type="entry name" value="Holliday junction ATP-dependent DNA helicase RuvB"/>
    <property type="match status" value="1"/>
</dbReference>
<dbReference type="FunFam" id="1.10.8.60:FF:000023">
    <property type="entry name" value="Holliday junction ATP-dependent DNA helicase RuvB"/>
    <property type="match status" value="1"/>
</dbReference>
<dbReference type="FunFam" id="3.40.50.300:FF:000073">
    <property type="entry name" value="Holliday junction ATP-dependent DNA helicase RuvB"/>
    <property type="match status" value="1"/>
</dbReference>
<dbReference type="Gene3D" id="1.10.8.60">
    <property type="match status" value="1"/>
</dbReference>
<dbReference type="Gene3D" id="3.40.50.300">
    <property type="entry name" value="P-loop containing nucleotide triphosphate hydrolases"/>
    <property type="match status" value="1"/>
</dbReference>
<dbReference type="Gene3D" id="1.10.10.10">
    <property type="entry name" value="Winged helix-like DNA-binding domain superfamily/Winged helix DNA-binding domain"/>
    <property type="match status" value="1"/>
</dbReference>
<dbReference type="HAMAP" id="MF_00016">
    <property type="entry name" value="DNA_HJ_migration_RuvB"/>
    <property type="match status" value="1"/>
</dbReference>
<dbReference type="InterPro" id="IPR003593">
    <property type="entry name" value="AAA+_ATPase"/>
</dbReference>
<dbReference type="InterPro" id="IPR041445">
    <property type="entry name" value="AAA_lid_4"/>
</dbReference>
<dbReference type="InterPro" id="IPR004605">
    <property type="entry name" value="DNA_helicase_Holl-junc_RuvB"/>
</dbReference>
<dbReference type="InterPro" id="IPR027417">
    <property type="entry name" value="P-loop_NTPase"/>
</dbReference>
<dbReference type="InterPro" id="IPR008824">
    <property type="entry name" value="RuvB-like_N"/>
</dbReference>
<dbReference type="InterPro" id="IPR008823">
    <property type="entry name" value="RuvB_C"/>
</dbReference>
<dbReference type="InterPro" id="IPR036388">
    <property type="entry name" value="WH-like_DNA-bd_sf"/>
</dbReference>
<dbReference type="InterPro" id="IPR036390">
    <property type="entry name" value="WH_DNA-bd_sf"/>
</dbReference>
<dbReference type="NCBIfam" id="NF000868">
    <property type="entry name" value="PRK00080.1"/>
    <property type="match status" value="1"/>
</dbReference>
<dbReference type="NCBIfam" id="TIGR00635">
    <property type="entry name" value="ruvB"/>
    <property type="match status" value="1"/>
</dbReference>
<dbReference type="PANTHER" id="PTHR42848">
    <property type="match status" value="1"/>
</dbReference>
<dbReference type="PANTHER" id="PTHR42848:SF1">
    <property type="entry name" value="HOLLIDAY JUNCTION BRANCH MIGRATION COMPLEX SUBUNIT RUVB"/>
    <property type="match status" value="1"/>
</dbReference>
<dbReference type="Pfam" id="PF17864">
    <property type="entry name" value="AAA_lid_4"/>
    <property type="match status" value="1"/>
</dbReference>
<dbReference type="Pfam" id="PF05491">
    <property type="entry name" value="RuvB_C"/>
    <property type="match status" value="1"/>
</dbReference>
<dbReference type="Pfam" id="PF05496">
    <property type="entry name" value="RuvB_N"/>
    <property type="match status" value="1"/>
</dbReference>
<dbReference type="SMART" id="SM00382">
    <property type="entry name" value="AAA"/>
    <property type="match status" value="1"/>
</dbReference>
<dbReference type="SUPFAM" id="SSF52540">
    <property type="entry name" value="P-loop containing nucleoside triphosphate hydrolases"/>
    <property type="match status" value="1"/>
</dbReference>
<dbReference type="SUPFAM" id="SSF46785">
    <property type="entry name" value="Winged helix' DNA-binding domain"/>
    <property type="match status" value="1"/>
</dbReference>